<organism>
    <name type="scientific">Mus musculus</name>
    <name type="common">Mouse</name>
    <dbReference type="NCBI Taxonomy" id="10090"/>
    <lineage>
        <taxon>Eukaryota</taxon>
        <taxon>Metazoa</taxon>
        <taxon>Chordata</taxon>
        <taxon>Craniata</taxon>
        <taxon>Vertebrata</taxon>
        <taxon>Euteleostomi</taxon>
        <taxon>Mammalia</taxon>
        <taxon>Eutheria</taxon>
        <taxon>Euarchontoglires</taxon>
        <taxon>Glires</taxon>
        <taxon>Rodentia</taxon>
        <taxon>Myomorpha</taxon>
        <taxon>Muroidea</taxon>
        <taxon>Muridae</taxon>
        <taxon>Murinae</taxon>
        <taxon>Mus</taxon>
        <taxon>Mus</taxon>
    </lineage>
</organism>
<proteinExistence type="evidence at protein level"/>
<accession>P26149</accession>
<accession>B1ARN7</accession>
<accession>Q8R0J6</accession>
<reference key="1">
    <citation type="journal article" date="2009" name="PLoS Biol.">
        <title>Lineage-specific biology revealed by a finished genome assembly of the mouse.</title>
        <authorList>
            <person name="Church D.M."/>
            <person name="Goodstadt L."/>
            <person name="Hillier L.W."/>
            <person name="Zody M.C."/>
            <person name="Goldstein S."/>
            <person name="She X."/>
            <person name="Bult C.J."/>
            <person name="Agarwala R."/>
            <person name="Cherry J.L."/>
            <person name="DiCuccio M."/>
            <person name="Hlavina W."/>
            <person name="Kapustin Y."/>
            <person name="Meric P."/>
            <person name="Maglott D."/>
            <person name="Birtle Z."/>
            <person name="Marques A.C."/>
            <person name="Graves T."/>
            <person name="Zhou S."/>
            <person name="Teague B."/>
            <person name="Potamousis K."/>
            <person name="Churas C."/>
            <person name="Place M."/>
            <person name="Herschleb J."/>
            <person name="Runnheim R."/>
            <person name="Forrest D."/>
            <person name="Amos-Landgraf J."/>
            <person name="Schwartz D.C."/>
            <person name="Cheng Z."/>
            <person name="Lindblad-Toh K."/>
            <person name="Eichler E.E."/>
            <person name="Ponting C.P."/>
        </authorList>
    </citation>
    <scope>NUCLEOTIDE SEQUENCE [LARGE SCALE GENOMIC DNA]</scope>
    <source>
        <strain>C57BL/6J</strain>
    </source>
</reference>
<reference key="2">
    <citation type="journal article" date="2004" name="Genome Res.">
        <title>The status, quality, and expansion of the NIH full-length cDNA project: the Mammalian Gene Collection (MGC).</title>
        <authorList>
            <consortium name="The MGC Project Team"/>
        </authorList>
    </citation>
    <scope>NUCLEOTIDE SEQUENCE [LARGE SCALE MRNA]</scope>
    <source>
        <strain>FVB/N</strain>
        <tissue>Kidney</tissue>
        <tissue>Liver</tissue>
    </source>
</reference>
<reference key="3">
    <citation type="journal article" date="1991" name="Proc. Natl. Acad. Sci. U.S.A.">
        <title>Multiple forms of mouse 3 beta-hydroxysteroid dehydrogenase/delta 5-delta 4 isomerase and differential expression in gonads, adrenal glands, liver, and kidneys of both sexes.</title>
        <authorList>
            <person name="Bain P.A."/>
            <person name="Yoo M."/>
            <person name="Clarke T."/>
            <person name="Hammond S.H."/>
            <person name="Payne A.H."/>
        </authorList>
    </citation>
    <scope>NUCLEOTIDE SEQUENCE [MRNA] OF 109-373</scope>
    <source>
        <strain>BALB/cJ</strain>
    </source>
</reference>
<reference key="4">
    <citation type="journal article" date="2010" name="Cell">
        <title>A tissue-specific atlas of mouse protein phosphorylation and expression.</title>
        <authorList>
            <person name="Huttlin E.L."/>
            <person name="Jedrychowski M.P."/>
            <person name="Elias J.E."/>
            <person name="Goswami T."/>
            <person name="Rad R."/>
            <person name="Beausoleil S.A."/>
            <person name="Villen J."/>
            <person name="Haas W."/>
            <person name="Sowa M.E."/>
            <person name="Gygi S.P."/>
        </authorList>
    </citation>
    <scope>IDENTIFICATION BY MASS SPECTROMETRY [LARGE SCALE ANALYSIS]</scope>
    <source>
        <tissue>Kidney</tissue>
        <tissue>Liver</tissue>
    </source>
</reference>
<evidence type="ECO:0000250" key="1"/>
<evidence type="ECO:0000250" key="2">
    <source>
        <dbReference type="UniProtKB" id="P26439"/>
    </source>
</evidence>
<evidence type="ECO:0000255" key="3"/>
<evidence type="ECO:0000305" key="4"/>
<evidence type="ECO:0000312" key="5">
    <source>
        <dbReference type="MGI" id="MGI:96234"/>
    </source>
</evidence>
<protein>
    <recommendedName>
        <fullName evidence="4">3 beta-hydroxysteroid dehydrogenase/Delta 5--&gt;4-isomerase type 2</fullName>
    </recommendedName>
    <alternativeName>
        <fullName>3 beta-hydroxysteroid dehydrogenase/Delta 5--&gt;4-isomerase type II</fullName>
        <shortName>3-beta-HSD II</shortName>
    </alternativeName>
    <domain>
        <recommendedName>
            <fullName>3-beta-hydroxy-Delta(5)-steroid dehydrogenase</fullName>
            <ecNumber evidence="2">1.1.1.145</ecNumber>
        </recommendedName>
        <alternativeName>
            <fullName>3-beta-hydroxy-5-ene steroid dehydrogenase</fullName>
        </alternativeName>
        <alternativeName>
            <fullName>Progesterone reductase</fullName>
        </alternativeName>
    </domain>
    <domain>
        <recommendedName>
            <fullName>Steroid Delta-isomerase</fullName>
            <ecNumber evidence="2">5.3.3.1</ecNumber>
        </recommendedName>
        <alternativeName>
            <fullName>Delta-5-3-ketosteroid isomerase</fullName>
        </alternativeName>
    </domain>
</protein>
<dbReference type="EC" id="1.1.1.145" evidence="2"/>
<dbReference type="EC" id="5.3.3.1" evidence="2"/>
<dbReference type="EMBL" id="AL606755">
    <property type="status" value="NOT_ANNOTATED_CDS"/>
    <property type="molecule type" value="Genomic_DNA"/>
</dbReference>
<dbReference type="EMBL" id="BC026757">
    <property type="protein sequence ID" value="AAH26757.1"/>
    <property type="molecule type" value="mRNA"/>
</dbReference>
<dbReference type="EMBL" id="BC040397">
    <property type="protein sequence ID" value="AAH40397.1"/>
    <property type="molecule type" value="mRNA"/>
</dbReference>
<dbReference type="EMBL" id="M75886">
    <property type="status" value="NOT_ANNOTATED_CDS"/>
    <property type="molecule type" value="mRNA"/>
</dbReference>
<dbReference type="CCDS" id="CCDS17667.1"/>
<dbReference type="RefSeq" id="NP_001346670.1">
    <property type="nucleotide sequence ID" value="NM_001359741.1"/>
</dbReference>
<dbReference type="RefSeq" id="NP_694873.2">
    <property type="nucleotide sequence ID" value="NM_153193.3"/>
</dbReference>
<dbReference type="RefSeq" id="XP_006501101.1">
    <property type="nucleotide sequence ID" value="XM_006501038.3"/>
</dbReference>
<dbReference type="SMR" id="P26149"/>
<dbReference type="BioGRID" id="200438">
    <property type="interactions" value="1"/>
</dbReference>
<dbReference type="FunCoup" id="P26149">
    <property type="interactions" value="113"/>
</dbReference>
<dbReference type="STRING" id="10090.ENSMUSP00000102636"/>
<dbReference type="iPTMnet" id="P26149"/>
<dbReference type="PhosphoSitePlus" id="P26149"/>
<dbReference type="jPOST" id="P26149"/>
<dbReference type="PaxDb" id="10090-ENSMUSP00000102636"/>
<dbReference type="PeptideAtlas" id="P26149"/>
<dbReference type="ProteomicsDB" id="296417"/>
<dbReference type="DNASU" id="15493"/>
<dbReference type="Ensembl" id="ENSMUST00000107021.8">
    <property type="protein sequence ID" value="ENSMUSP00000102635.2"/>
    <property type="gene ID" value="ENSMUSG00000063730.14"/>
</dbReference>
<dbReference type="Ensembl" id="ENSMUST00000107022.8">
    <property type="protein sequence ID" value="ENSMUSP00000102636.2"/>
    <property type="gene ID" value="ENSMUSG00000063730.14"/>
</dbReference>
<dbReference type="Ensembl" id="ENSMUST00000177651.2">
    <property type="protein sequence ID" value="ENSMUSP00000136533.2"/>
    <property type="gene ID" value="ENSMUSG00000063730.14"/>
</dbReference>
<dbReference type="GeneID" id="15493"/>
<dbReference type="KEGG" id="mmu:15493"/>
<dbReference type="UCSC" id="uc008qqc.2">
    <property type="organism name" value="mouse"/>
</dbReference>
<dbReference type="AGR" id="MGI:96234"/>
<dbReference type="CTD" id="3284"/>
<dbReference type="MGI" id="MGI:96234">
    <property type="gene designation" value="Hsd3b2"/>
</dbReference>
<dbReference type="VEuPathDB" id="HostDB:ENSMUSG00000063730"/>
<dbReference type="eggNOG" id="KOG1430">
    <property type="taxonomic scope" value="Eukaryota"/>
</dbReference>
<dbReference type="GeneTree" id="ENSGT00940000155444"/>
<dbReference type="HOGENOM" id="CLU_007383_6_3_1"/>
<dbReference type="InParanoid" id="P26149"/>
<dbReference type="OMA" id="DTFYTCA"/>
<dbReference type="OrthoDB" id="1925334at2759"/>
<dbReference type="PhylomeDB" id="P26149"/>
<dbReference type="TreeFam" id="TF343138"/>
<dbReference type="Reactome" id="R-MMU-193048">
    <property type="pathway name" value="Androgen biosynthesis"/>
</dbReference>
<dbReference type="Reactome" id="R-MMU-193993">
    <property type="pathway name" value="Mineralocorticoid biosynthesis"/>
</dbReference>
<dbReference type="Reactome" id="R-MMU-194002">
    <property type="pathway name" value="Glucocorticoid biosynthesis"/>
</dbReference>
<dbReference type="UniPathway" id="UPA00062"/>
<dbReference type="BioGRID-ORCS" id="15493">
    <property type="hits" value="1 hit in 79 CRISPR screens"/>
</dbReference>
<dbReference type="ChiTaRS" id="Hsd3b2">
    <property type="organism name" value="mouse"/>
</dbReference>
<dbReference type="PRO" id="PR:P26149"/>
<dbReference type="Proteomes" id="UP000000589">
    <property type="component" value="Chromosome 3"/>
</dbReference>
<dbReference type="RNAct" id="P26149">
    <property type="molecule type" value="protein"/>
</dbReference>
<dbReference type="Bgee" id="ENSMUSG00000063730">
    <property type="expression patterns" value="Expressed in right kidney and 22 other cell types or tissues"/>
</dbReference>
<dbReference type="GO" id="GO:0005783">
    <property type="term" value="C:endoplasmic reticulum"/>
    <property type="evidence" value="ECO:0000250"/>
    <property type="project" value="UniProtKB"/>
</dbReference>
<dbReference type="GO" id="GO:0005789">
    <property type="term" value="C:endoplasmic reticulum membrane"/>
    <property type="evidence" value="ECO:0007669"/>
    <property type="project" value="UniProtKB-SubCell"/>
</dbReference>
<dbReference type="GO" id="GO:0031966">
    <property type="term" value="C:mitochondrial membrane"/>
    <property type="evidence" value="ECO:0007669"/>
    <property type="project" value="UniProtKB-SubCell"/>
</dbReference>
<dbReference type="GO" id="GO:0003854">
    <property type="term" value="F:3-beta-hydroxy-Delta5-steroid dehydrogenase (NAD+) activity"/>
    <property type="evidence" value="ECO:0000250"/>
    <property type="project" value="UniProtKB"/>
</dbReference>
<dbReference type="GO" id="GO:0004769">
    <property type="term" value="F:steroid Delta-isomerase activity"/>
    <property type="evidence" value="ECO:0000250"/>
    <property type="project" value="UniProtKB"/>
</dbReference>
<dbReference type="GO" id="GO:0006702">
    <property type="term" value="P:androgen biosynthetic process"/>
    <property type="evidence" value="ECO:0000250"/>
    <property type="project" value="UniProtKB"/>
</dbReference>
<dbReference type="GO" id="GO:0006694">
    <property type="term" value="P:steroid biosynthetic process"/>
    <property type="evidence" value="ECO:0000250"/>
    <property type="project" value="UniProtKB"/>
</dbReference>
<dbReference type="FunFam" id="3.40.50.720:FF:000220">
    <property type="entry name" value="3 beta-hydroxysteroid dehydrogenase/Delta 5--&gt;4-isomerase type 1"/>
    <property type="match status" value="1"/>
</dbReference>
<dbReference type="Gene3D" id="3.40.50.720">
    <property type="entry name" value="NAD(P)-binding Rossmann-like Domain"/>
    <property type="match status" value="1"/>
</dbReference>
<dbReference type="InterPro" id="IPR002225">
    <property type="entry name" value="3Beta_OHSteriod_DH/Estase"/>
</dbReference>
<dbReference type="InterPro" id="IPR050177">
    <property type="entry name" value="Lipid_A_modif_metabolic_enz"/>
</dbReference>
<dbReference type="InterPro" id="IPR036291">
    <property type="entry name" value="NAD(P)-bd_dom_sf"/>
</dbReference>
<dbReference type="PANTHER" id="PTHR43245">
    <property type="entry name" value="BIFUNCTIONAL POLYMYXIN RESISTANCE PROTEIN ARNA"/>
    <property type="match status" value="1"/>
</dbReference>
<dbReference type="PANTHER" id="PTHR43245:SF51">
    <property type="entry name" value="SHORT CHAIN DEHYDROGENASE_REDUCTASE FAMILY 42E, MEMBER 2"/>
    <property type="match status" value="1"/>
</dbReference>
<dbReference type="Pfam" id="PF01073">
    <property type="entry name" value="3Beta_HSD"/>
    <property type="match status" value="1"/>
</dbReference>
<dbReference type="SUPFAM" id="SSF51735">
    <property type="entry name" value="NAD(P)-binding Rossmann-fold domains"/>
    <property type="match status" value="1"/>
</dbReference>
<keyword id="KW-0256">Endoplasmic reticulum</keyword>
<keyword id="KW-0413">Isomerase</keyword>
<keyword id="KW-0443">Lipid metabolism</keyword>
<keyword id="KW-0472">Membrane</keyword>
<keyword id="KW-0496">Mitochondrion</keyword>
<keyword id="KW-0511">Multifunctional enzyme</keyword>
<keyword id="KW-0520">NAD</keyword>
<keyword id="KW-0560">Oxidoreductase</keyword>
<keyword id="KW-1185">Reference proteome</keyword>
<keyword id="KW-0755">Steroidogenesis</keyword>
<keyword id="KW-0812">Transmembrane</keyword>
<keyword id="KW-1133">Transmembrane helix</keyword>
<name>3BHS2_MOUSE</name>
<gene>
    <name evidence="5" type="primary">Hsd3b2</name>
</gene>
<sequence length="373" mass="41923">MPGWSCLVTGAGGFLGQRIIQLLVQEEDLEEIRVLDKVFRPETRKEFFNLETSIKVTVLEGDILDTQYLRRACQGISVVIHTAAIIDVTGVIPRQTILDVNLKGTQNLLEACIQASVPAFIFSSSVDVAGPNSYKEIVLNGHEEECHESTWSDPYPYSKKMAEKAVLAANGSMLKNGGTLQTCALRPMCIYGERSPLISNIIIMALKHKGILRSFGKFNTANPVYVGNVAWAHILAARGLRDPKKSPNIQGEFYYISDDTPHQSFDDISYTLSKEWGFCLDSSWSLPVPLLYWLAFLLETVSFLLSPIYRYIPPFNRHLVTLSGSTFTFSYKKAQRDLGYEPLVSWEEAKQKTSEWIGTLVEQHRETLDTKSQ</sequence>
<feature type="chain" id="PRO_0000087781" description="3 beta-hydroxysteroid dehydrogenase/Delta 5--&gt;4-isomerase type 2">
    <location>
        <begin position="1"/>
        <end position="373"/>
    </location>
</feature>
<feature type="transmembrane region" description="Helical" evidence="3">
    <location>
        <begin position="288"/>
        <end position="308"/>
    </location>
</feature>
<feature type="active site" description="Proton acceptor" evidence="1">
    <location>
        <position position="155"/>
    </location>
</feature>
<feature type="binding site" evidence="1">
    <location>
        <position position="159"/>
    </location>
    <ligand>
        <name>NAD(+)</name>
        <dbReference type="ChEBI" id="CHEBI:57540"/>
    </ligand>
</feature>
<feature type="sequence conflict" description="In Ref. 2; AAH26757/AAH40397." evidence="4" ref="2">
    <original>G</original>
    <variation>K</variation>
    <location>
        <position position="12"/>
    </location>
</feature>
<feature type="sequence conflict" description="In Ref. 2; AAH26757/AAH40397." evidence="4" ref="2">
    <original>I</original>
    <variation>N</variation>
    <location>
        <position position="54"/>
    </location>
</feature>
<comment type="function">
    <text evidence="2">3-beta-HSD is a bifunctional enzyme, that catalyzes the oxidative conversion of Delta(5)-ene-3-beta-hydroxy steroid, and the oxidative conversion of ketosteroids. The 3-beta-HSD enzymatic system plays a crucial role in the biosynthesis of all classes of hormonal steroids.</text>
</comment>
<comment type="catalytic activity">
    <reaction evidence="2">
        <text>a 3beta-hydroxy-Delta(5)-steroid + NAD(+) = a 3-oxo-Delta(5)-steroid + NADH + H(+)</text>
        <dbReference type="Rhea" id="RHEA:24076"/>
        <dbReference type="ChEBI" id="CHEBI:1722"/>
        <dbReference type="ChEBI" id="CHEBI:15378"/>
        <dbReference type="ChEBI" id="CHEBI:47907"/>
        <dbReference type="ChEBI" id="CHEBI:57540"/>
        <dbReference type="ChEBI" id="CHEBI:57945"/>
        <dbReference type="EC" id="1.1.1.145"/>
    </reaction>
</comment>
<comment type="catalytic activity">
    <reaction evidence="2">
        <text>a 3-oxo-Delta(5)-steroid = a 3-oxo-Delta(4)-steroid</text>
        <dbReference type="Rhea" id="RHEA:14709"/>
        <dbReference type="ChEBI" id="CHEBI:47907"/>
        <dbReference type="ChEBI" id="CHEBI:47909"/>
        <dbReference type="EC" id="5.3.3.1"/>
    </reaction>
</comment>
<comment type="catalytic activity">
    <reaction evidence="2">
        <text>pregnenolone + NAD(+) = pregn-5-ene-3,20-dione + NADH + H(+)</text>
        <dbReference type="Rhea" id="RHEA:43924"/>
        <dbReference type="ChEBI" id="CHEBI:15378"/>
        <dbReference type="ChEBI" id="CHEBI:16581"/>
        <dbReference type="ChEBI" id="CHEBI:57540"/>
        <dbReference type="ChEBI" id="CHEBI:57945"/>
        <dbReference type="ChEBI" id="CHEBI:63837"/>
    </reaction>
    <physiologicalReaction direction="left-to-right" evidence="2">
        <dbReference type="Rhea" id="RHEA:43925"/>
    </physiologicalReaction>
</comment>
<comment type="catalytic activity">
    <reaction evidence="2">
        <text>pregn-5-ene-3,20-dione = progesterone</text>
        <dbReference type="Rhea" id="RHEA:43928"/>
        <dbReference type="ChEBI" id="CHEBI:17026"/>
        <dbReference type="ChEBI" id="CHEBI:63837"/>
    </reaction>
    <physiologicalReaction direction="left-to-right" evidence="2">
        <dbReference type="Rhea" id="RHEA:43929"/>
    </physiologicalReaction>
</comment>
<comment type="catalytic activity">
    <reaction evidence="2">
        <text>3beta-hydroxyandrost-5-en-17-one + NAD(+) = androst-5-ene-3,17-dione + NADH + H(+)</text>
        <dbReference type="Rhea" id="RHEA:43932"/>
        <dbReference type="ChEBI" id="CHEBI:15378"/>
        <dbReference type="ChEBI" id="CHEBI:28689"/>
        <dbReference type="ChEBI" id="CHEBI:57540"/>
        <dbReference type="ChEBI" id="CHEBI:57945"/>
        <dbReference type="ChEBI" id="CHEBI:83865"/>
        <dbReference type="EC" id="1.1.1.145"/>
    </reaction>
    <physiologicalReaction direction="left-to-right" evidence="2">
        <dbReference type="Rhea" id="RHEA:43933"/>
    </physiologicalReaction>
</comment>
<comment type="catalytic activity">
    <reaction evidence="2">
        <text>androst-5-ene-3,17-dione = androst-4-ene-3,17-dione</text>
        <dbReference type="Rhea" id="RHEA:43936"/>
        <dbReference type="ChEBI" id="CHEBI:16422"/>
        <dbReference type="ChEBI" id="CHEBI:83865"/>
    </reaction>
    <physiologicalReaction direction="left-to-right" evidence="2">
        <dbReference type="Rhea" id="RHEA:43937"/>
    </physiologicalReaction>
</comment>
<comment type="pathway">
    <text evidence="2">Lipid metabolism; steroid biosynthesis.</text>
</comment>
<comment type="subcellular location">
    <subcellularLocation>
        <location evidence="2">Endoplasmic reticulum membrane</location>
        <topology evidence="3">Single-pass membrane protein</topology>
    </subcellularLocation>
    <subcellularLocation>
        <location evidence="2">Mitochondrion membrane</location>
        <topology evidence="3">Single-pass membrane protein</topology>
    </subcellularLocation>
</comment>
<comment type="tissue specificity">
    <text>Liver and kidney.</text>
</comment>
<comment type="similarity">
    <text evidence="4">Belongs to the 3-beta-HSD family.</text>
</comment>